<organism>
    <name type="scientific">Californiconus californicus</name>
    <name type="common">California cone</name>
    <name type="synonym">Conus californicus</name>
    <dbReference type="NCBI Taxonomy" id="1736779"/>
    <lineage>
        <taxon>Eukaryota</taxon>
        <taxon>Metazoa</taxon>
        <taxon>Spiralia</taxon>
        <taxon>Lophotrochozoa</taxon>
        <taxon>Mollusca</taxon>
        <taxon>Gastropoda</taxon>
        <taxon>Caenogastropoda</taxon>
        <taxon>Neogastropoda</taxon>
        <taxon>Conoidea</taxon>
        <taxon>Conidae</taxon>
        <taxon>Californiconus</taxon>
    </lineage>
</organism>
<proteinExistence type="evidence at transcript level"/>
<name>COC1D_CONCL</name>
<evidence type="ECO:0000250" key="1"/>
<evidence type="ECO:0000305" key="2"/>
<accession>A6YR24</accession>
<keyword id="KW-0102">Bromination</keyword>
<keyword id="KW-1015">Disulfide bond</keyword>
<keyword id="KW-0301">Gamma-carboxyglutamic acid</keyword>
<keyword id="KW-0379">Hydroxylation</keyword>
<keyword id="KW-0872">Ion channel impairing toxin</keyword>
<keyword id="KW-0528">Neurotoxin</keyword>
<keyword id="KW-0964">Secreted</keyword>
<keyword id="KW-0800">Toxin</keyword>
<comment type="function">
    <text evidence="1">Mu-conotoxins block voltage-gated sodium channels. This toxin reversibly blocks voltage-gated sodium channel in cephalopods, with no alteration in the voltage dependence of sodium conductance or on the kinetics of inactivation (By similarity).</text>
</comment>
<comment type="subcellular location">
    <subcellularLocation>
        <location evidence="1">Secreted</location>
    </subcellularLocation>
</comment>
<comment type="tissue specificity">
    <text>Expressed by the venom duct.</text>
</comment>
<comment type="domain">
    <text>The cysteine framework is XII (C-C-C-C-CC-C-C).</text>
</comment>
<reference key="1">
    <citation type="journal article" date="2011" name="J. Exp. Biol.">
        <title>A diverse family of novel peptide toxins from an unusual cone snail, Conus californicus.</title>
        <authorList>
            <person name="Gilly W.F."/>
            <person name="Richmond T.A."/>
            <person name="Duda T.F. Jr."/>
            <person name="Elliger C."/>
            <person name="Lebaric Z."/>
            <person name="Schulz J."/>
            <person name="Bingham J.P."/>
            <person name="Sweedler J.V."/>
        </authorList>
    </citation>
    <scope>NUCLEOTIDE SEQUENCE [MRNA]</scope>
    <source>
        <tissue>Venom duct</tissue>
    </source>
</reference>
<feature type="peptide" id="PRO_0000392267" description="Mu-conotoxin-like Cal 12.1.1d">
    <location>
        <begin position="1"/>
        <end position="45"/>
    </location>
</feature>
<feature type="modified residue" description="6'-bromotryptophan" evidence="1">
    <location>
        <position position="17"/>
    </location>
</feature>
<feature type="modified residue" description="4-carboxyglutamate" evidence="1">
    <location>
        <position position="21"/>
    </location>
</feature>
<feature type="modified residue" description="4-hydroxyproline" evidence="1">
    <location>
        <position position="23"/>
    </location>
</feature>
<feature type="modified residue" description="6'-bromotryptophan" evidence="1">
    <location>
        <position position="37"/>
    </location>
</feature>
<feature type="modified residue" description="6'-bromotryptophan" evidence="1">
    <location>
        <position position="38"/>
    </location>
</feature>
<feature type="modified residue" description="4-hydroxyproline" evidence="1">
    <location>
        <position position="40"/>
    </location>
</feature>
<feature type="modified residue" description="6'-bromotryptophan" evidence="1">
    <location>
        <position position="44"/>
    </location>
</feature>
<feature type="disulfide bond" evidence="2">
    <location>
        <begin position="3"/>
        <end position="16"/>
    </location>
</feature>
<feature type="disulfide bond" evidence="1">
    <location>
        <begin position="11"/>
        <end position="28"/>
    </location>
</feature>
<feature type="disulfide bond" evidence="1">
    <location>
        <begin position="18"/>
        <end position="33"/>
    </location>
</feature>
<feature type="disulfide bond" evidence="1">
    <location>
        <begin position="27"/>
        <end position="39"/>
    </location>
</feature>
<protein>
    <recommendedName>
        <fullName>Mu-conotoxin-like Cal 12.1.1d</fullName>
    </recommendedName>
    <alternativeName>
        <fullName>Conotoxin CalTx 12.1.1E</fullName>
    </alternativeName>
</protein>
<dbReference type="EMBL" id="EF644178">
    <property type="protein sequence ID" value="ABR92948.1"/>
    <property type="molecule type" value="mRNA"/>
</dbReference>
<dbReference type="ConoServer" id="797">
    <property type="toxin name" value="Cal12.1.1d"/>
</dbReference>
<dbReference type="GO" id="GO:0005576">
    <property type="term" value="C:extracellular region"/>
    <property type="evidence" value="ECO:0007669"/>
    <property type="project" value="UniProtKB-SubCell"/>
</dbReference>
<dbReference type="GO" id="GO:0099106">
    <property type="term" value="F:ion channel regulator activity"/>
    <property type="evidence" value="ECO:0007669"/>
    <property type="project" value="UniProtKB-KW"/>
</dbReference>
<dbReference type="GO" id="GO:0090729">
    <property type="term" value="F:toxin activity"/>
    <property type="evidence" value="ECO:0007669"/>
    <property type="project" value="UniProtKB-KW"/>
</dbReference>
<sequence>DVCDSLVEGRCIHNGCWCDEEAPHGNCCDTAGCTAWWWCPGTKWD</sequence>